<feature type="chain" id="PRO_0000277744" description="Integration host factor subunit alpha">
    <location>
        <begin position="1"/>
        <end position="100"/>
    </location>
</feature>
<organism>
    <name type="scientific">Methylobacillus flagellatus (strain ATCC 51484 / DSM 6875 / VKM B-1610 / KT)</name>
    <dbReference type="NCBI Taxonomy" id="265072"/>
    <lineage>
        <taxon>Bacteria</taxon>
        <taxon>Pseudomonadati</taxon>
        <taxon>Pseudomonadota</taxon>
        <taxon>Betaproteobacteria</taxon>
        <taxon>Nitrosomonadales</taxon>
        <taxon>Methylophilaceae</taxon>
        <taxon>Methylobacillus</taxon>
    </lineage>
</organism>
<accession>Q1GZS3</accession>
<protein>
    <recommendedName>
        <fullName evidence="1">Integration host factor subunit alpha</fullName>
        <shortName evidence="1">IHF-alpha</shortName>
    </recommendedName>
</protein>
<comment type="function">
    <text evidence="1">This protein is one of the two subunits of integration host factor, a specific DNA-binding protein that functions in genetic recombination as well as in transcriptional and translational control.</text>
</comment>
<comment type="subunit">
    <text evidence="1">Heterodimer of an alpha and a beta chain.</text>
</comment>
<comment type="similarity">
    <text evidence="1">Belongs to the bacterial histone-like protein family.</text>
</comment>
<name>IHFA_METFK</name>
<keyword id="KW-0233">DNA recombination</keyword>
<keyword id="KW-0238">DNA-binding</keyword>
<keyword id="KW-1185">Reference proteome</keyword>
<keyword id="KW-0804">Transcription</keyword>
<keyword id="KW-0805">Transcription regulation</keyword>
<keyword id="KW-0810">Translation regulation</keyword>
<proteinExistence type="inferred from homology"/>
<reference key="1">
    <citation type="submission" date="2006-03" db="EMBL/GenBank/DDBJ databases">
        <title>Complete sequence of Methylobacillus flagellatus KT.</title>
        <authorList>
            <consortium name="US DOE Joint Genome Institute"/>
            <person name="Copeland A."/>
            <person name="Lucas S."/>
            <person name="Lapidus A."/>
            <person name="Barry K."/>
            <person name="Detter J.C."/>
            <person name="Glavina del Rio T."/>
            <person name="Hammon N."/>
            <person name="Israni S."/>
            <person name="Dalin E."/>
            <person name="Tice H."/>
            <person name="Pitluck S."/>
            <person name="Brettin T."/>
            <person name="Bruce D."/>
            <person name="Han C."/>
            <person name="Tapia R."/>
            <person name="Saunders E."/>
            <person name="Gilna P."/>
            <person name="Schmutz J."/>
            <person name="Larimer F."/>
            <person name="Land M."/>
            <person name="Kyrpides N."/>
            <person name="Anderson I."/>
            <person name="Richardson P."/>
        </authorList>
    </citation>
    <scope>NUCLEOTIDE SEQUENCE [LARGE SCALE GENOMIC DNA]</scope>
    <source>
        <strain>ATCC 51484 / DSM 6875 / VKM B-1610 / KT</strain>
    </source>
</reference>
<evidence type="ECO:0000255" key="1">
    <source>
        <dbReference type="HAMAP-Rule" id="MF_00380"/>
    </source>
</evidence>
<gene>
    <name evidence="1" type="primary">ihfA</name>
    <name evidence="1" type="synonym">himA</name>
    <name type="ordered locus">Mfla_1997</name>
</gene>
<dbReference type="EMBL" id="CP000284">
    <property type="protein sequence ID" value="ABE50264.1"/>
    <property type="molecule type" value="Genomic_DNA"/>
</dbReference>
<dbReference type="RefSeq" id="WP_011480218.1">
    <property type="nucleotide sequence ID" value="NC_007947.1"/>
</dbReference>
<dbReference type="SMR" id="Q1GZS3"/>
<dbReference type="STRING" id="265072.Mfla_1997"/>
<dbReference type="KEGG" id="mfa:Mfla_1997"/>
<dbReference type="eggNOG" id="COG0776">
    <property type="taxonomic scope" value="Bacteria"/>
</dbReference>
<dbReference type="HOGENOM" id="CLU_105066_1_3_4"/>
<dbReference type="OrthoDB" id="9797747at2"/>
<dbReference type="Proteomes" id="UP000002440">
    <property type="component" value="Chromosome"/>
</dbReference>
<dbReference type="GO" id="GO:0005829">
    <property type="term" value="C:cytosol"/>
    <property type="evidence" value="ECO:0007669"/>
    <property type="project" value="TreeGrafter"/>
</dbReference>
<dbReference type="GO" id="GO:0003677">
    <property type="term" value="F:DNA binding"/>
    <property type="evidence" value="ECO:0007669"/>
    <property type="project" value="UniProtKB-UniRule"/>
</dbReference>
<dbReference type="GO" id="GO:0030527">
    <property type="term" value="F:structural constituent of chromatin"/>
    <property type="evidence" value="ECO:0007669"/>
    <property type="project" value="InterPro"/>
</dbReference>
<dbReference type="GO" id="GO:0006310">
    <property type="term" value="P:DNA recombination"/>
    <property type="evidence" value="ECO:0007669"/>
    <property type="project" value="UniProtKB-UniRule"/>
</dbReference>
<dbReference type="GO" id="GO:0009893">
    <property type="term" value="P:positive regulation of metabolic process"/>
    <property type="evidence" value="ECO:0007669"/>
    <property type="project" value="UniProtKB-ARBA"/>
</dbReference>
<dbReference type="GO" id="GO:0006355">
    <property type="term" value="P:regulation of DNA-templated transcription"/>
    <property type="evidence" value="ECO:0007669"/>
    <property type="project" value="UniProtKB-UniRule"/>
</dbReference>
<dbReference type="GO" id="GO:0006417">
    <property type="term" value="P:regulation of translation"/>
    <property type="evidence" value="ECO:0007669"/>
    <property type="project" value="UniProtKB-UniRule"/>
</dbReference>
<dbReference type="CDD" id="cd13835">
    <property type="entry name" value="IHF_A"/>
    <property type="match status" value="1"/>
</dbReference>
<dbReference type="FunFam" id="4.10.520.10:FF:000002">
    <property type="entry name" value="Integration host factor subunit alpha"/>
    <property type="match status" value="1"/>
</dbReference>
<dbReference type="Gene3D" id="4.10.520.10">
    <property type="entry name" value="IHF-like DNA-binding proteins"/>
    <property type="match status" value="1"/>
</dbReference>
<dbReference type="HAMAP" id="MF_00380">
    <property type="entry name" value="IHF_alpha"/>
    <property type="match status" value="1"/>
</dbReference>
<dbReference type="InterPro" id="IPR000119">
    <property type="entry name" value="Hist_DNA-bd"/>
</dbReference>
<dbReference type="InterPro" id="IPR020816">
    <property type="entry name" value="Histone-like_DNA-bd_CS"/>
</dbReference>
<dbReference type="InterPro" id="IPR010992">
    <property type="entry name" value="IHF-like_DNA-bd_dom_sf"/>
</dbReference>
<dbReference type="InterPro" id="IPR005684">
    <property type="entry name" value="IHF_alpha"/>
</dbReference>
<dbReference type="NCBIfam" id="TIGR00987">
    <property type="entry name" value="himA"/>
    <property type="match status" value="1"/>
</dbReference>
<dbReference type="NCBIfam" id="NF001401">
    <property type="entry name" value="PRK00285.1"/>
    <property type="match status" value="1"/>
</dbReference>
<dbReference type="PANTHER" id="PTHR33175">
    <property type="entry name" value="DNA-BINDING PROTEIN HU"/>
    <property type="match status" value="1"/>
</dbReference>
<dbReference type="PANTHER" id="PTHR33175:SF2">
    <property type="entry name" value="INTEGRATION HOST FACTOR SUBUNIT ALPHA"/>
    <property type="match status" value="1"/>
</dbReference>
<dbReference type="Pfam" id="PF00216">
    <property type="entry name" value="Bac_DNA_binding"/>
    <property type="match status" value="1"/>
</dbReference>
<dbReference type="PRINTS" id="PR01727">
    <property type="entry name" value="DNABINDINGHU"/>
</dbReference>
<dbReference type="SMART" id="SM00411">
    <property type="entry name" value="BHL"/>
    <property type="match status" value="1"/>
</dbReference>
<dbReference type="SUPFAM" id="SSF47729">
    <property type="entry name" value="IHF-like DNA-binding proteins"/>
    <property type="match status" value="1"/>
</dbReference>
<dbReference type="PROSITE" id="PS00045">
    <property type="entry name" value="HISTONE_LIKE"/>
    <property type="match status" value="1"/>
</dbReference>
<sequence length="100" mass="11133">MTLTKADLADLLFEQVGLNKREAKDMVEAFFEEIRMALEAGDSVKLSGFGNFELRQKSERPGRNPKTGEEIPITARRVVTFHASQKLKSKVEEAYAGAST</sequence>